<reference key="1">
    <citation type="journal article" date="1995" name="Proc. R. Soc. B">
        <title>Molecular phylogeny and evolution of marsupial protamine P1 genes.</title>
        <authorList>
            <person name="Retief J.D."/>
            <person name="Krajewski C."/>
            <person name="Westerman M."/>
            <person name="Winkfein R.J."/>
            <person name="Dixon G.H."/>
        </authorList>
    </citation>
    <scope>NUCLEOTIDE SEQUENCE [GENOMIC DNA]</scope>
</reference>
<organism>
    <name type="scientific">Monodelphis domestica</name>
    <name type="common">Gray short-tailed opossum</name>
    <dbReference type="NCBI Taxonomy" id="13616"/>
    <lineage>
        <taxon>Eukaryota</taxon>
        <taxon>Metazoa</taxon>
        <taxon>Chordata</taxon>
        <taxon>Craniata</taxon>
        <taxon>Vertebrata</taxon>
        <taxon>Euteleostomi</taxon>
        <taxon>Mammalia</taxon>
        <taxon>Metatheria</taxon>
        <taxon>Didelphimorphia</taxon>
        <taxon>Didelphidae</taxon>
        <taxon>Monodelphis</taxon>
    </lineage>
</organism>
<feature type="chain" id="PRO_0000191495" description="Sperm protamine P1">
    <location>
        <begin position="1"/>
        <end position="58"/>
    </location>
</feature>
<feature type="region of interest" description="Disordered" evidence="1">
    <location>
        <begin position="1"/>
        <end position="58"/>
    </location>
</feature>
<keyword id="KW-0158">Chromosome</keyword>
<keyword id="KW-0217">Developmental protein</keyword>
<keyword id="KW-0221">Differentiation</keyword>
<keyword id="KW-0226">DNA condensation</keyword>
<keyword id="KW-0238">DNA-binding</keyword>
<keyword id="KW-0544">Nucleosome core</keyword>
<keyword id="KW-0539">Nucleus</keyword>
<keyword id="KW-1185">Reference proteome</keyword>
<keyword id="KW-0744">Spermatogenesis</keyword>
<evidence type="ECO:0000256" key="1">
    <source>
        <dbReference type="SAM" id="MobiDB-lite"/>
    </source>
</evidence>
<evidence type="ECO:0000305" key="2"/>
<comment type="function">
    <text>Protamines substitute for histones in the chromatin of sperm during the haploid phase of spermatogenesis. They compact sperm DNA into a highly condensed, stable and inactive complex.</text>
</comment>
<comment type="subcellular location">
    <subcellularLocation>
        <location>Nucleus</location>
    </subcellularLocation>
    <subcellularLocation>
        <location>Chromosome</location>
    </subcellularLocation>
</comment>
<comment type="tissue specificity">
    <text>Testis.</text>
</comment>
<comment type="similarity">
    <text evidence="2">Belongs to the protamine P1 family.</text>
</comment>
<gene>
    <name type="primary">PRM1</name>
</gene>
<proteinExistence type="evidence at transcript level"/>
<sequence length="58" mass="7941">MARYRRRSRSRSRSRYGRRRRRSRSRRRRSRRRRRRRGRRGRGYHRRSPHRRRRRRRR</sequence>
<name>HSP1_MONDO</name>
<protein>
    <recommendedName>
        <fullName>Sperm protamine P1</fullName>
    </recommendedName>
</protein>
<accession>P67836</accession>
<accession>P35305</accession>
<dbReference type="EMBL" id="L35448">
    <property type="protein sequence ID" value="AAA74612.1"/>
    <property type="molecule type" value="Genomic_DNA"/>
</dbReference>
<dbReference type="RefSeq" id="NP_001028139.1">
    <property type="nucleotide sequence ID" value="NM_001032967.1"/>
</dbReference>
<dbReference type="Ensembl" id="ENSMODT00000006452.2">
    <property type="protein sequence ID" value="ENSMODP00000006320.2"/>
    <property type="gene ID" value="ENSMODG00000005135.2"/>
</dbReference>
<dbReference type="GeneID" id="497042"/>
<dbReference type="KEGG" id="mdo:497042"/>
<dbReference type="CTD" id="5619"/>
<dbReference type="HOGENOM" id="CLU_2978527_0_0_1"/>
<dbReference type="InParanoid" id="P67836"/>
<dbReference type="OMA" id="MARYICC"/>
<dbReference type="Proteomes" id="UP000002280">
    <property type="component" value="Chromosome 6"/>
</dbReference>
<dbReference type="Bgee" id="ENSMODG00000005135">
    <property type="expression patterns" value="Expressed in spermatid and 13 other cell types or tissues"/>
</dbReference>
<dbReference type="GO" id="GO:0000786">
    <property type="term" value="C:nucleosome"/>
    <property type="evidence" value="ECO:0007669"/>
    <property type="project" value="UniProtKB-KW"/>
</dbReference>
<dbReference type="GO" id="GO:0005634">
    <property type="term" value="C:nucleus"/>
    <property type="evidence" value="ECO:0007669"/>
    <property type="project" value="UniProtKB-SubCell"/>
</dbReference>
<dbReference type="GO" id="GO:0003677">
    <property type="term" value="F:DNA binding"/>
    <property type="evidence" value="ECO:0007669"/>
    <property type="project" value="UniProtKB-KW"/>
</dbReference>
<dbReference type="GO" id="GO:0030261">
    <property type="term" value="P:chromosome condensation"/>
    <property type="evidence" value="ECO:0007669"/>
    <property type="project" value="UniProtKB-KW"/>
</dbReference>
<dbReference type="GO" id="GO:0035092">
    <property type="term" value="P:sperm DNA condensation"/>
    <property type="evidence" value="ECO:0007669"/>
    <property type="project" value="InterPro"/>
</dbReference>
<dbReference type="InterPro" id="IPR000221">
    <property type="entry name" value="Protamine_P1"/>
</dbReference>
<dbReference type="PROSITE" id="PS00048">
    <property type="entry name" value="PROTAMINE_P1"/>
    <property type="match status" value="1"/>
</dbReference>